<organism>
    <name type="scientific">Methanosarcina mazei (strain ATCC BAA-159 / DSM 3647 / Goe1 / Go1 / JCM 11833 / OCM 88)</name>
    <name type="common">Methanosarcina frisia</name>
    <dbReference type="NCBI Taxonomy" id="192952"/>
    <lineage>
        <taxon>Archaea</taxon>
        <taxon>Methanobacteriati</taxon>
        <taxon>Methanobacteriota</taxon>
        <taxon>Stenosarchaea group</taxon>
        <taxon>Methanomicrobia</taxon>
        <taxon>Methanosarcinales</taxon>
        <taxon>Methanosarcinaceae</taxon>
        <taxon>Methanosarcina</taxon>
    </lineage>
</organism>
<gene>
    <name type="ordered locus">MM_0871</name>
</gene>
<accession>Q8PYJ0</accession>
<reference key="1">
    <citation type="journal article" date="2002" name="J. Mol. Microbiol. Biotechnol.">
        <title>The genome of Methanosarcina mazei: evidence for lateral gene transfer between Bacteria and Archaea.</title>
        <authorList>
            <person name="Deppenmeier U."/>
            <person name="Johann A."/>
            <person name="Hartsch T."/>
            <person name="Merkl R."/>
            <person name="Schmitz R.A."/>
            <person name="Martinez-Arias R."/>
            <person name="Henne A."/>
            <person name="Wiezer A."/>
            <person name="Baeumer S."/>
            <person name="Jacobi C."/>
            <person name="Brueggemann H."/>
            <person name="Lienard T."/>
            <person name="Christmann A."/>
            <person name="Boemecke M."/>
            <person name="Steckel S."/>
            <person name="Bhattacharyya A."/>
            <person name="Lykidis A."/>
            <person name="Overbeek R."/>
            <person name="Klenk H.-P."/>
            <person name="Gunsalus R.P."/>
            <person name="Fritz H.-J."/>
            <person name="Gottschalk G."/>
        </authorList>
    </citation>
    <scope>NUCLEOTIDE SEQUENCE [LARGE SCALE GENOMIC DNA]</scope>
    <source>
        <strain>ATCC BAA-159 / DSM 3647 / Goe1 / Go1 / JCM 11833 / OCM 88</strain>
    </source>
</reference>
<name>HMGCS_METMA</name>
<evidence type="ECO:0000255" key="1">
    <source>
        <dbReference type="HAMAP-Rule" id="MF_01409"/>
    </source>
</evidence>
<dbReference type="EC" id="2.3.3.10" evidence="1"/>
<dbReference type="EMBL" id="AE008384">
    <property type="protein sequence ID" value="AAM30567.1"/>
    <property type="molecule type" value="Genomic_DNA"/>
</dbReference>
<dbReference type="RefSeq" id="WP_011032821.1">
    <property type="nucleotide sequence ID" value="NC_003901.1"/>
</dbReference>
<dbReference type="SMR" id="Q8PYJ0"/>
<dbReference type="KEGG" id="mma:MM_0871"/>
<dbReference type="PATRIC" id="fig|192952.21.peg.1030"/>
<dbReference type="eggNOG" id="arCOG01767">
    <property type="taxonomic scope" value="Archaea"/>
</dbReference>
<dbReference type="HOGENOM" id="CLU_039592_7_0_2"/>
<dbReference type="UniPathway" id="UPA00058">
    <property type="reaction ID" value="UER00102"/>
</dbReference>
<dbReference type="Proteomes" id="UP000000595">
    <property type="component" value="Chromosome"/>
</dbReference>
<dbReference type="GO" id="GO:0003985">
    <property type="term" value="F:acetyl-CoA C-acetyltransferase activity"/>
    <property type="evidence" value="ECO:0007669"/>
    <property type="project" value="UniProtKB-UniRule"/>
</dbReference>
<dbReference type="GO" id="GO:0004421">
    <property type="term" value="F:hydroxymethylglutaryl-CoA synthase activity"/>
    <property type="evidence" value="ECO:0007669"/>
    <property type="project" value="InterPro"/>
</dbReference>
<dbReference type="GO" id="GO:0010142">
    <property type="term" value="P:farnesyl diphosphate biosynthetic process, mevalonate pathway"/>
    <property type="evidence" value="ECO:0007669"/>
    <property type="project" value="TreeGrafter"/>
</dbReference>
<dbReference type="GO" id="GO:0019287">
    <property type="term" value="P:isopentenyl diphosphate biosynthetic process, mevalonate pathway"/>
    <property type="evidence" value="ECO:0007669"/>
    <property type="project" value="UniProtKB-UniRule"/>
</dbReference>
<dbReference type="CDD" id="cd00827">
    <property type="entry name" value="init_cond_enzymes"/>
    <property type="match status" value="1"/>
</dbReference>
<dbReference type="FunFam" id="3.40.47.10:FF:000046">
    <property type="entry name" value="UPF0219 protein M1627_1703"/>
    <property type="match status" value="1"/>
</dbReference>
<dbReference type="Gene3D" id="3.40.47.10">
    <property type="match status" value="1"/>
</dbReference>
<dbReference type="HAMAP" id="MF_01409">
    <property type="entry name" value="HMG_CoA_synth_arch"/>
    <property type="match status" value="1"/>
</dbReference>
<dbReference type="InterPro" id="IPR013747">
    <property type="entry name" value="ACP_syn_III_C"/>
</dbReference>
<dbReference type="InterPro" id="IPR004656">
    <property type="entry name" value="HMG_CoA_Synthase"/>
</dbReference>
<dbReference type="InterPro" id="IPR016039">
    <property type="entry name" value="Thiolase-like"/>
</dbReference>
<dbReference type="NCBIfam" id="TIGR00748">
    <property type="entry name" value="HMG_CoA_syn_Arc"/>
    <property type="match status" value="1"/>
</dbReference>
<dbReference type="NCBIfam" id="NF003274">
    <property type="entry name" value="PRK04262.1"/>
    <property type="match status" value="1"/>
</dbReference>
<dbReference type="PANTHER" id="PTHR43323">
    <property type="entry name" value="3-HYDROXY-3-METHYLGLUTARYL COENZYME A SYNTHASE"/>
    <property type="match status" value="1"/>
</dbReference>
<dbReference type="PANTHER" id="PTHR43323:SF2">
    <property type="entry name" value="HYDROXYMETHYLGLUTARYL-COA SYNTHASE"/>
    <property type="match status" value="1"/>
</dbReference>
<dbReference type="Pfam" id="PF08541">
    <property type="entry name" value="ACP_syn_III_C"/>
    <property type="match status" value="1"/>
</dbReference>
<dbReference type="SUPFAM" id="SSF53901">
    <property type="entry name" value="Thiolase-like"/>
    <property type="match status" value="2"/>
</dbReference>
<sequence>MTIGIVSYGAYVPRYRIKIEEIARLWGDDAEALKNGLMVYEKSVPDIDEDAATIAVEAARNAMIRSGVDPSRIGAVYTGSESHPYAVKPTSTIVAQAIGATPQMTAADFEFACKAGTAAVQACMGLVGSGMVDLGLAIGADVSQGAPSDALEYTAAAGGVACLIGRNESELAAIIEDTYSFTTDTPDFWRREGMPYPEHGGRFTGEPGYFKHVTNGAKGLLEKLGAKPEDYDYAVFHQPNGKFPSKAAKMLGFTKAQITPGLVVPKIGNTYSGSCLMGIAATLDQAKPGDRIFATAFGSGAGSDAFSITVTDRIEEIRNRAPTVSELIKDPVYIDYARYARHKGKIRLA</sequence>
<comment type="function">
    <text evidence="1">Catalyzes the condensation of acetyl-CoA with acetoacetyl-CoA to form 3-hydroxy-3-methylglutaryl-CoA (HMG-CoA). Functions in the mevalonate (MVA) pathway leading to isopentenyl diphosphate (IPP), a key precursor for the biosynthesis of isoprenoid compounds that are building blocks of archaeal membrane lipids.</text>
</comment>
<comment type="catalytic activity">
    <reaction evidence="1">
        <text>acetoacetyl-CoA + acetyl-CoA + H2O = (3S)-3-hydroxy-3-methylglutaryl-CoA + CoA + H(+)</text>
        <dbReference type="Rhea" id="RHEA:10188"/>
        <dbReference type="ChEBI" id="CHEBI:15377"/>
        <dbReference type="ChEBI" id="CHEBI:15378"/>
        <dbReference type="ChEBI" id="CHEBI:43074"/>
        <dbReference type="ChEBI" id="CHEBI:57286"/>
        <dbReference type="ChEBI" id="CHEBI:57287"/>
        <dbReference type="ChEBI" id="CHEBI:57288"/>
        <dbReference type="EC" id="2.3.3.10"/>
    </reaction>
    <physiologicalReaction direction="left-to-right" evidence="1">
        <dbReference type="Rhea" id="RHEA:10189"/>
    </physiologicalReaction>
</comment>
<comment type="pathway">
    <text evidence="1">Metabolic intermediate biosynthesis; (R)-mevalonate biosynthesis; (R)-mevalonate from acetyl-CoA: step 2/3.</text>
</comment>
<comment type="subunit">
    <text evidence="1">Interacts with acetoacetyl-CoA thiolase that catalyzes the precedent step in the pathway and with a DUF35 protein. The acetoacetyl-CoA thiolase/HMG-CoA synthase complex channels the intermediate via a fused CoA-binding site, which allows for efficient coupling of the endergonic thiolase reaction with the exergonic HMGCS reaction.</text>
</comment>
<comment type="similarity">
    <text evidence="1">Belongs to the thiolase-like superfamily. Archaeal HMG-CoA synthase family.</text>
</comment>
<protein>
    <recommendedName>
        <fullName evidence="1">Hydroxymethylglutaryl-CoA synthase</fullName>
        <shortName evidence="1">HMG-CoA synthase</shortName>
        <shortName evidence="1">HMGCS</shortName>
        <ecNumber evidence="1">2.3.3.10</ecNumber>
    </recommendedName>
</protein>
<proteinExistence type="inferred from homology"/>
<feature type="chain" id="PRO_0000057616" description="Hydroxymethylglutaryl-CoA synthase">
    <location>
        <begin position="1"/>
        <end position="349"/>
    </location>
</feature>
<feature type="active site" description="Proton donor/acceptor" evidence="1">
    <location>
        <position position="81"/>
    </location>
</feature>
<feature type="active site" description="Acyl-thioester intermediate" evidence="1">
    <location>
        <position position="113"/>
    </location>
</feature>
<feature type="active site" description="Proton donor/acceptor" evidence="1">
    <location>
        <position position="237"/>
    </location>
</feature>
<feature type="binding site" evidence="1">
    <location>
        <position position="29"/>
    </location>
    <ligand>
        <name>(3S)-3-hydroxy-3-methylglutaryl-CoA</name>
        <dbReference type="ChEBI" id="CHEBI:43074"/>
    </ligand>
</feature>
<feature type="binding site" evidence="1">
    <location>
        <position position="30"/>
    </location>
    <ligand>
        <name>(3S)-3-hydroxy-3-methylglutaryl-CoA</name>
        <dbReference type="ChEBI" id="CHEBI:43074"/>
    </ligand>
</feature>
<feature type="binding site" evidence="1">
    <location>
        <position position="113"/>
    </location>
    <ligand>
        <name>(3S)-3-hydroxy-3-methylglutaryl-CoA</name>
        <dbReference type="ChEBI" id="CHEBI:43074"/>
    </ligand>
</feature>
<feature type="binding site" evidence="1">
    <location>
        <position position="154"/>
    </location>
    <ligand>
        <name>(3S)-3-hydroxy-3-methylglutaryl-CoA</name>
        <dbReference type="ChEBI" id="CHEBI:43074"/>
    </ligand>
</feature>
<feature type="binding site" evidence="1">
    <location>
        <position position="202"/>
    </location>
    <ligand>
        <name>CoA</name>
        <dbReference type="ChEBI" id="CHEBI:57287"/>
        <note>ligand shared with acetoacetyl-CoA thiolase</note>
    </ligand>
</feature>
<feature type="binding site" evidence="1">
    <location>
        <position position="204"/>
    </location>
    <ligand>
        <name>(3S)-3-hydroxy-3-methylglutaryl-CoA</name>
        <dbReference type="ChEBI" id="CHEBI:43074"/>
    </ligand>
</feature>
<feature type="binding site" evidence="1">
    <location>
        <position position="237"/>
    </location>
    <ligand>
        <name>(3S)-3-hydroxy-3-methylglutaryl-CoA</name>
        <dbReference type="ChEBI" id="CHEBI:43074"/>
    </ligand>
</feature>
<feature type="binding site" evidence="1">
    <location>
        <position position="242"/>
    </location>
    <ligand>
        <name>CoA</name>
        <dbReference type="ChEBI" id="CHEBI:57287"/>
        <note>ligand shared with acetoacetyl-CoA thiolase</note>
    </ligand>
</feature>
<feature type="binding site" evidence="1">
    <location>
        <position position="246"/>
    </location>
    <ligand>
        <name>(3S)-3-hydroxy-3-methylglutaryl-CoA</name>
        <dbReference type="ChEBI" id="CHEBI:43074"/>
    </ligand>
</feature>
<feature type="binding site" evidence="1">
    <location>
        <position position="269"/>
    </location>
    <ligand>
        <name>(3S)-3-hydroxy-3-methylglutaryl-CoA</name>
        <dbReference type="ChEBI" id="CHEBI:43074"/>
    </ligand>
</feature>
<feature type="binding site" evidence="1">
    <location>
        <position position="299"/>
    </location>
    <ligand>
        <name>(3S)-3-hydroxy-3-methylglutaryl-CoA</name>
        <dbReference type="ChEBI" id="CHEBI:43074"/>
    </ligand>
</feature>
<keyword id="KW-0012">Acyltransferase</keyword>
<keyword id="KW-0414">Isoprene biosynthesis</keyword>
<keyword id="KW-0808">Transferase</keyword>